<feature type="chain" id="PRO_1000043703" description="GTP cyclohydrolase 1">
    <location>
        <begin position="1"/>
        <end position="183"/>
    </location>
</feature>
<feature type="binding site" evidence="2">
    <location>
        <position position="71"/>
    </location>
    <ligand>
        <name>Zn(2+)</name>
        <dbReference type="ChEBI" id="CHEBI:29105"/>
    </ligand>
</feature>
<feature type="binding site" evidence="2">
    <location>
        <position position="74"/>
    </location>
    <ligand>
        <name>Zn(2+)</name>
        <dbReference type="ChEBI" id="CHEBI:29105"/>
    </ligand>
</feature>
<feature type="binding site" evidence="2">
    <location>
        <position position="142"/>
    </location>
    <ligand>
        <name>Zn(2+)</name>
        <dbReference type="ChEBI" id="CHEBI:29105"/>
    </ligand>
</feature>
<sequence>MEENIVNILKSIGEDPTREGLLNTPKRVKKAYDFLTSGYHVDITKVVNGAIFEESTEGMILVRDIEVYSLCEHHLLPFYGRAHVAYLPNKKIIGISKIPRIVDVFARRLQVQERLTEQIAYAVQEVLDPQGVAVVIKAKHLCMMMRGVEKQNSELFTSCLLGAFKENMVTRSEFLDLIRTGST</sequence>
<proteinExistence type="inferred from homology"/>
<reference key="1">
    <citation type="journal article" date="2006" name="Proc. Natl. Acad. Sci. U.S.A.">
        <title>Genome reduction in Leptospira borgpetersenii reflects limited transmission potential.</title>
        <authorList>
            <person name="Bulach D.M."/>
            <person name="Zuerner R.L."/>
            <person name="Wilson P."/>
            <person name="Seemann T."/>
            <person name="McGrath A."/>
            <person name="Cullen P.A."/>
            <person name="Davis J."/>
            <person name="Johnson M."/>
            <person name="Kuczek E."/>
            <person name="Alt D.P."/>
            <person name="Peterson-Burch B."/>
            <person name="Coppel R.L."/>
            <person name="Rood J.I."/>
            <person name="Davies J.K."/>
            <person name="Adler B."/>
        </authorList>
    </citation>
    <scope>NUCLEOTIDE SEQUENCE [LARGE SCALE GENOMIC DNA]</scope>
    <source>
        <strain>JB197</strain>
    </source>
</reference>
<protein>
    <recommendedName>
        <fullName evidence="2">GTP cyclohydrolase 1</fullName>
        <ecNumber evidence="2">3.5.4.16</ecNumber>
    </recommendedName>
    <alternativeName>
        <fullName evidence="2">GTP cyclohydrolase I</fullName>
        <shortName evidence="2">GTP-CH-I</shortName>
    </alternativeName>
</protein>
<comment type="catalytic activity">
    <reaction evidence="2">
        <text>GTP + H2O = 7,8-dihydroneopterin 3'-triphosphate + formate + H(+)</text>
        <dbReference type="Rhea" id="RHEA:17473"/>
        <dbReference type="ChEBI" id="CHEBI:15377"/>
        <dbReference type="ChEBI" id="CHEBI:15378"/>
        <dbReference type="ChEBI" id="CHEBI:15740"/>
        <dbReference type="ChEBI" id="CHEBI:37565"/>
        <dbReference type="ChEBI" id="CHEBI:58462"/>
        <dbReference type="EC" id="3.5.4.16"/>
    </reaction>
</comment>
<comment type="pathway">
    <text evidence="2">Cofactor biosynthesis; 7,8-dihydroneopterin triphosphate biosynthesis; 7,8-dihydroneopterin triphosphate from GTP: step 1/1.</text>
</comment>
<comment type="subunit">
    <text evidence="1">Toroid-shaped homodecamer, composed of two pentamers of five dimers.</text>
</comment>
<comment type="similarity">
    <text evidence="2">Belongs to the GTP cyclohydrolase I family.</text>
</comment>
<gene>
    <name evidence="2" type="primary">folE</name>
    <name type="ordered locus">LBJ_2937</name>
</gene>
<accession>Q04P36</accession>
<dbReference type="EC" id="3.5.4.16" evidence="2"/>
<dbReference type="EMBL" id="CP000350">
    <property type="protein sequence ID" value="ABJ77334.1"/>
    <property type="molecule type" value="Genomic_DNA"/>
</dbReference>
<dbReference type="RefSeq" id="WP_011669218.1">
    <property type="nucleotide sequence ID" value="NC_008510.1"/>
</dbReference>
<dbReference type="SMR" id="Q04P36"/>
<dbReference type="KEGG" id="lbj:LBJ_2937"/>
<dbReference type="HOGENOM" id="CLU_049768_3_1_12"/>
<dbReference type="UniPathway" id="UPA00848">
    <property type="reaction ID" value="UER00151"/>
</dbReference>
<dbReference type="Proteomes" id="UP000000656">
    <property type="component" value="Chromosome 1"/>
</dbReference>
<dbReference type="GO" id="GO:0005737">
    <property type="term" value="C:cytoplasm"/>
    <property type="evidence" value="ECO:0007669"/>
    <property type="project" value="TreeGrafter"/>
</dbReference>
<dbReference type="GO" id="GO:0005525">
    <property type="term" value="F:GTP binding"/>
    <property type="evidence" value="ECO:0007669"/>
    <property type="project" value="UniProtKB-KW"/>
</dbReference>
<dbReference type="GO" id="GO:0003934">
    <property type="term" value="F:GTP cyclohydrolase I activity"/>
    <property type="evidence" value="ECO:0007669"/>
    <property type="project" value="UniProtKB-UniRule"/>
</dbReference>
<dbReference type="GO" id="GO:0008270">
    <property type="term" value="F:zinc ion binding"/>
    <property type="evidence" value="ECO:0007669"/>
    <property type="project" value="UniProtKB-UniRule"/>
</dbReference>
<dbReference type="GO" id="GO:0006730">
    <property type="term" value="P:one-carbon metabolic process"/>
    <property type="evidence" value="ECO:0007669"/>
    <property type="project" value="UniProtKB-UniRule"/>
</dbReference>
<dbReference type="GO" id="GO:0006729">
    <property type="term" value="P:tetrahydrobiopterin biosynthetic process"/>
    <property type="evidence" value="ECO:0007669"/>
    <property type="project" value="TreeGrafter"/>
</dbReference>
<dbReference type="GO" id="GO:0046654">
    <property type="term" value="P:tetrahydrofolate biosynthetic process"/>
    <property type="evidence" value="ECO:0007669"/>
    <property type="project" value="UniProtKB-UniRule"/>
</dbReference>
<dbReference type="FunFam" id="3.30.1130.10:FF:000001">
    <property type="entry name" value="GTP cyclohydrolase 1"/>
    <property type="match status" value="1"/>
</dbReference>
<dbReference type="Gene3D" id="1.10.286.10">
    <property type="match status" value="1"/>
</dbReference>
<dbReference type="Gene3D" id="3.30.1130.10">
    <property type="match status" value="1"/>
</dbReference>
<dbReference type="HAMAP" id="MF_00223">
    <property type="entry name" value="FolE"/>
    <property type="match status" value="1"/>
</dbReference>
<dbReference type="InterPro" id="IPR043133">
    <property type="entry name" value="GTP-CH-I_C/QueF"/>
</dbReference>
<dbReference type="InterPro" id="IPR043134">
    <property type="entry name" value="GTP-CH-I_N"/>
</dbReference>
<dbReference type="InterPro" id="IPR001474">
    <property type="entry name" value="GTP_CycHdrlase_I"/>
</dbReference>
<dbReference type="InterPro" id="IPR018234">
    <property type="entry name" value="GTP_CycHdrlase_I_CS"/>
</dbReference>
<dbReference type="InterPro" id="IPR020602">
    <property type="entry name" value="GTP_CycHdrlase_I_dom"/>
</dbReference>
<dbReference type="NCBIfam" id="TIGR00063">
    <property type="entry name" value="folE"/>
    <property type="match status" value="1"/>
</dbReference>
<dbReference type="NCBIfam" id="NF006825">
    <property type="entry name" value="PRK09347.1-2"/>
    <property type="match status" value="1"/>
</dbReference>
<dbReference type="NCBIfam" id="NF006826">
    <property type="entry name" value="PRK09347.1-3"/>
    <property type="match status" value="1"/>
</dbReference>
<dbReference type="PANTHER" id="PTHR11109:SF7">
    <property type="entry name" value="GTP CYCLOHYDROLASE 1"/>
    <property type="match status" value="1"/>
</dbReference>
<dbReference type="PANTHER" id="PTHR11109">
    <property type="entry name" value="GTP CYCLOHYDROLASE I"/>
    <property type="match status" value="1"/>
</dbReference>
<dbReference type="Pfam" id="PF01227">
    <property type="entry name" value="GTP_cyclohydroI"/>
    <property type="match status" value="1"/>
</dbReference>
<dbReference type="SUPFAM" id="SSF55620">
    <property type="entry name" value="Tetrahydrobiopterin biosynthesis enzymes-like"/>
    <property type="match status" value="1"/>
</dbReference>
<dbReference type="PROSITE" id="PS00859">
    <property type="entry name" value="GTP_CYCLOHYDROL_1_1"/>
    <property type="match status" value="1"/>
</dbReference>
<dbReference type="PROSITE" id="PS00860">
    <property type="entry name" value="GTP_CYCLOHYDROL_1_2"/>
    <property type="match status" value="1"/>
</dbReference>
<evidence type="ECO:0000250" key="1"/>
<evidence type="ECO:0000255" key="2">
    <source>
        <dbReference type="HAMAP-Rule" id="MF_00223"/>
    </source>
</evidence>
<organism>
    <name type="scientific">Leptospira borgpetersenii serovar Hardjo-bovis (strain JB197)</name>
    <dbReference type="NCBI Taxonomy" id="355277"/>
    <lineage>
        <taxon>Bacteria</taxon>
        <taxon>Pseudomonadati</taxon>
        <taxon>Spirochaetota</taxon>
        <taxon>Spirochaetia</taxon>
        <taxon>Leptospirales</taxon>
        <taxon>Leptospiraceae</taxon>
        <taxon>Leptospira</taxon>
    </lineage>
</organism>
<keyword id="KW-0342">GTP-binding</keyword>
<keyword id="KW-0378">Hydrolase</keyword>
<keyword id="KW-0479">Metal-binding</keyword>
<keyword id="KW-0547">Nucleotide-binding</keyword>
<keyword id="KW-0554">One-carbon metabolism</keyword>
<keyword id="KW-0862">Zinc</keyword>
<name>GCH1_LEPBJ</name>